<sequence length="325" mass="36067">MSEAESESRAGREEVWIEKYRPQTLDDVMGHENIVGRLKSYVSRNDLSHMLFSGPAGTGKTTCATAIARELYGDDWREHFLELNASDERGIDVVRDRIKNFARTSFGGVEYRIIFLDEADALTSDAQSALRRTMEQFSNNVRFILSCNYSSQIIDPIQSRCAVFRFSPLADDAVAEEIRTIAAEEDIELTEDGLDALVYAADGDMRKAINGLQAASVSGDTVDESAVYAITSTARPEEIRTMVQSALDGDFTASRATLDRLLTEEGIAGGDIIDQLHRSIWEFDIDDDAAVRVLERIGETDYRITRGANERVQLEAMLASLAQGE</sequence>
<accession>Q5UZE5</accession>
<comment type="function">
    <text evidence="1">Part of the RFC clamp loader complex which loads the PCNA sliding clamp onto DNA.</text>
</comment>
<comment type="subunit">
    <text evidence="1">Heteromultimer composed of small subunits (RfcS) and large subunits (RfcL).</text>
</comment>
<comment type="similarity">
    <text evidence="1">Belongs to the activator 1 small subunits family. RfcS subfamily.</text>
</comment>
<comment type="sequence caution" evidence="2">
    <conflict type="erroneous initiation">
        <sequence resource="EMBL-CDS" id="AAV47358"/>
    </conflict>
</comment>
<reference key="1">
    <citation type="journal article" date="2004" name="Genome Res.">
        <title>Genome sequence of Haloarcula marismortui: a halophilic archaeon from the Dead Sea.</title>
        <authorList>
            <person name="Baliga N.S."/>
            <person name="Bonneau R."/>
            <person name="Facciotti M.T."/>
            <person name="Pan M."/>
            <person name="Glusman G."/>
            <person name="Deutsch E.W."/>
            <person name="Shannon P."/>
            <person name="Chiu Y."/>
            <person name="Weng R.S."/>
            <person name="Gan R.R."/>
            <person name="Hung P."/>
            <person name="Date S.V."/>
            <person name="Marcotte E."/>
            <person name="Hood L."/>
            <person name="Ng W.V."/>
        </authorList>
    </citation>
    <scope>NUCLEOTIDE SEQUENCE [LARGE SCALE GENOMIC DNA]</scope>
    <source>
        <strain>ATCC 43049 / DSM 3752 / JCM 8966 / VKM B-1809</strain>
    </source>
</reference>
<protein>
    <recommendedName>
        <fullName evidence="1">Replication factor C small subunit</fullName>
        <shortName evidence="1">RFC small subunit</shortName>
    </recommendedName>
    <alternativeName>
        <fullName evidence="1">Clamp loader small subunit</fullName>
    </alternativeName>
</protein>
<dbReference type="EMBL" id="AY596297">
    <property type="protein sequence ID" value="AAV47358.1"/>
    <property type="status" value="ALT_INIT"/>
    <property type="molecule type" value="Genomic_DNA"/>
</dbReference>
<dbReference type="RefSeq" id="WP_049939018.1">
    <property type="nucleotide sequence ID" value="NC_006396.1"/>
</dbReference>
<dbReference type="SMR" id="Q5UZE5"/>
<dbReference type="STRING" id="272569.rrnAC2565"/>
<dbReference type="PaxDb" id="272569-rrnAC2565"/>
<dbReference type="EnsemblBacteria" id="AAV47358">
    <property type="protein sequence ID" value="AAV47358"/>
    <property type="gene ID" value="rrnAC2565"/>
</dbReference>
<dbReference type="GeneID" id="40153450"/>
<dbReference type="KEGG" id="hma:rrnAC2565"/>
<dbReference type="PATRIC" id="fig|272569.17.peg.3165"/>
<dbReference type="eggNOG" id="arCOG00469">
    <property type="taxonomic scope" value="Archaea"/>
</dbReference>
<dbReference type="HOGENOM" id="CLU_042324_2_1_2"/>
<dbReference type="Proteomes" id="UP000001169">
    <property type="component" value="Chromosome I"/>
</dbReference>
<dbReference type="GO" id="GO:0005663">
    <property type="term" value="C:DNA replication factor C complex"/>
    <property type="evidence" value="ECO:0007669"/>
    <property type="project" value="InterPro"/>
</dbReference>
<dbReference type="GO" id="GO:0005524">
    <property type="term" value="F:ATP binding"/>
    <property type="evidence" value="ECO:0007669"/>
    <property type="project" value="UniProtKB-UniRule"/>
</dbReference>
<dbReference type="GO" id="GO:0016887">
    <property type="term" value="F:ATP hydrolysis activity"/>
    <property type="evidence" value="ECO:0007669"/>
    <property type="project" value="InterPro"/>
</dbReference>
<dbReference type="GO" id="GO:0003677">
    <property type="term" value="F:DNA binding"/>
    <property type="evidence" value="ECO:0007669"/>
    <property type="project" value="InterPro"/>
</dbReference>
<dbReference type="GO" id="GO:0003689">
    <property type="term" value="F:DNA clamp loader activity"/>
    <property type="evidence" value="ECO:0007669"/>
    <property type="project" value="UniProtKB-UniRule"/>
</dbReference>
<dbReference type="GO" id="GO:0006281">
    <property type="term" value="P:DNA repair"/>
    <property type="evidence" value="ECO:0007669"/>
    <property type="project" value="TreeGrafter"/>
</dbReference>
<dbReference type="GO" id="GO:0006261">
    <property type="term" value="P:DNA-templated DNA replication"/>
    <property type="evidence" value="ECO:0007669"/>
    <property type="project" value="TreeGrafter"/>
</dbReference>
<dbReference type="CDD" id="cd00009">
    <property type="entry name" value="AAA"/>
    <property type="match status" value="1"/>
</dbReference>
<dbReference type="CDD" id="cd18140">
    <property type="entry name" value="HLD_clamp_RFC"/>
    <property type="match status" value="1"/>
</dbReference>
<dbReference type="FunFam" id="1.20.272.10:FF:000029">
    <property type="entry name" value="Replication factor C small subunit"/>
    <property type="match status" value="1"/>
</dbReference>
<dbReference type="FunFam" id="3.40.50.300:FF:000129">
    <property type="entry name" value="Replication factor C subunit 5"/>
    <property type="match status" value="1"/>
</dbReference>
<dbReference type="Gene3D" id="1.10.8.60">
    <property type="match status" value="1"/>
</dbReference>
<dbReference type="Gene3D" id="1.20.272.10">
    <property type="match status" value="1"/>
</dbReference>
<dbReference type="Gene3D" id="3.40.50.300">
    <property type="entry name" value="P-loop containing nucleotide triphosphate hydrolases"/>
    <property type="match status" value="1"/>
</dbReference>
<dbReference type="HAMAP" id="MF_01509">
    <property type="entry name" value="RfcS"/>
    <property type="match status" value="1"/>
</dbReference>
<dbReference type="InterPro" id="IPR003593">
    <property type="entry name" value="AAA+_ATPase"/>
</dbReference>
<dbReference type="InterPro" id="IPR003959">
    <property type="entry name" value="ATPase_AAA_core"/>
</dbReference>
<dbReference type="InterPro" id="IPR008921">
    <property type="entry name" value="DNA_pol3_clamp-load_cplx_C"/>
</dbReference>
<dbReference type="InterPro" id="IPR050238">
    <property type="entry name" value="DNA_Rep/Repair_Clamp_Loader"/>
</dbReference>
<dbReference type="InterPro" id="IPR027417">
    <property type="entry name" value="P-loop_NTPase"/>
</dbReference>
<dbReference type="InterPro" id="IPR023748">
    <property type="entry name" value="Rep_factor-C_ssu_arc"/>
</dbReference>
<dbReference type="InterPro" id="IPR013748">
    <property type="entry name" value="Rep_factorC_C"/>
</dbReference>
<dbReference type="InterPro" id="IPR047854">
    <property type="entry name" value="RFC_lid"/>
</dbReference>
<dbReference type="NCBIfam" id="NF001679">
    <property type="entry name" value="PRK00440.1"/>
    <property type="match status" value="1"/>
</dbReference>
<dbReference type="PANTHER" id="PTHR11669">
    <property type="entry name" value="REPLICATION FACTOR C / DNA POLYMERASE III GAMMA-TAU SUBUNIT"/>
    <property type="match status" value="1"/>
</dbReference>
<dbReference type="PANTHER" id="PTHR11669:SF20">
    <property type="entry name" value="REPLICATION FACTOR C SUBUNIT 4"/>
    <property type="match status" value="1"/>
</dbReference>
<dbReference type="Pfam" id="PF00004">
    <property type="entry name" value="AAA"/>
    <property type="match status" value="1"/>
</dbReference>
<dbReference type="Pfam" id="PF08542">
    <property type="entry name" value="Rep_fac_C"/>
    <property type="match status" value="1"/>
</dbReference>
<dbReference type="SMART" id="SM00382">
    <property type="entry name" value="AAA"/>
    <property type="match status" value="1"/>
</dbReference>
<dbReference type="SUPFAM" id="SSF52540">
    <property type="entry name" value="P-loop containing nucleoside triphosphate hydrolases"/>
    <property type="match status" value="1"/>
</dbReference>
<dbReference type="SUPFAM" id="SSF48019">
    <property type="entry name" value="post-AAA+ oligomerization domain-like"/>
    <property type="match status" value="1"/>
</dbReference>
<name>RFCS_HALMA</name>
<keyword id="KW-0067">ATP-binding</keyword>
<keyword id="KW-0235">DNA replication</keyword>
<keyword id="KW-0547">Nucleotide-binding</keyword>
<keyword id="KW-1185">Reference proteome</keyword>
<proteinExistence type="inferred from homology"/>
<gene>
    <name evidence="1" type="primary">rfcS</name>
    <name type="synonym">rfcC1</name>
    <name type="ordered locus">rrnAC2565</name>
</gene>
<feature type="chain" id="PRO_0000135972" description="Replication factor C small subunit">
    <location>
        <begin position="1"/>
        <end position="325"/>
    </location>
</feature>
<feature type="binding site" evidence="1">
    <location>
        <begin position="54"/>
        <end position="61"/>
    </location>
    <ligand>
        <name>ATP</name>
        <dbReference type="ChEBI" id="CHEBI:30616"/>
    </ligand>
</feature>
<organism>
    <name type="scientific">Haloarcula marismortui (strain ATCC 43049 / DSM 3752 / JCM 8966 / VKM B-1809)</name>
    <name type="common">Halobacterium marismortui</name>
    <dbReference type="NCBI Taxonomy" id="272569"/>
    <lineage>
        <taxon>Archaea</taxon>
        <taxon>Methanobacteriati</taxon>
        <taxon>Methanobacteriota</taxon>
        <taxon>Stenosarchaea group</taxon>
        <taxon>Halobacteria</taxon>
        <taxon>Halobacteriales</taxon>
        <taxon>Haloarculaceae</taxon>
        <taxon>Haloarcula</taxon>
    </lineage>
</organism>
<evidence type="ECO:0000255" key="1">
    <source>
        <dbReference type="HAMAP-Rule" id="MF_01509"/>
    </source>
</evidence>
<evidence type="ECO:0000305" key="2"/>